<keyword id="KW-1003">Cell membrane</keyword>
<keyword id="KW-0325">Glycoprotein</keyword>
<keyword id="KW-0328">Glycosyltransferase</keyword>
<keyword id="KW-0472">Membrane</keyword>
<keyword id="KW-1185">Reference proteome</keyword>
<keyword id="KW-0808">Transferase</keyword>
<keyword id="KW-0812">Transmembrane</keyword>
<keyword id="KW-1133">Transmembrane helix</keyword>
<comment type="function">
    <text evidence="4 7">Polymerizes chitin, a structural polymer of the cell wall and septum, by transferring the sugar moiety of UDP-GlcNAc to the non-reducing end of the growing chitin polymer (Probable). Plays an important role in septal growth or maintenance (PubMed:38468360). Mediates colony spore formation (PubMed:38468360).</text>
</comment>
<comment type="catalytic activity">
    <reaction evidence="7">
        <text>[(1-&gt;4)-N-acetyl-beta-D-glucosaminyl](n) + UDP-N-acetyl-alpha-D-glucosamine = [(1-&gt;4)-N-acetyl-beta-D-glucosaminyl](n+1) + UDP + H(+)</text>
        <dbReference type="Rhea" id="RHEA:16637"/>
        <dbReference type="Rhea" id="RHEA-COMP:9593"/>
        <dbReference type="Rhea" id="RHEA-COMP:9595"/>
        <dbReference type="ChEBI" id="CHEBI:15378"/>
        <dbReference type="ChEBI" id="CHEBI:17029"/>
        <dbReference type="ChEBI" id="CHEBI:57705"/>
        <dbReference type="ChEBI" id="CHEBI:58223"/>
        <dbReference type="EC" id="2.4.1.16"/>
    </reaction>
    <physiologicalReaction direction="left-to-right" evidence="7">
        <dbReference type="Rhea" id="RHEA:16638"/>
    </physiologicalReaction>
</comment>
<comment type="subcellular location">
    <subcellularLocation>
        <location evidence="7">Cell membrane</location>
        <topology evidence="1">Multi-pass membrane protein</topology>
    </subcellularLocation>
</comment>
<comment type="disruption phenotype">
    <text evidence="4">Leads to elevated spore production.</text>
</comment>
<comment type="similarity">
    <text evidence="6">Belongs to the chitin synthase family. Class VI subfamily.</text>
</comment>
<name>CHSG_ASPNC</name>
<feature type="chain" id="PRO_0000460981" description="Chitin synthase G">
    <location>
        <begin position="1"/>
        <end position="749"/>
    </location>
</feature>
<feature type="transmembrane region" description="Helical" evidence="1">
    <location>
        <begin position="40"/>
        <end position="60"/>
    </location>
</feature>
<feature type="transmembrane region" description="Helical" evidence="1">
    <location>
        <begin position="73"/>
        <end position="93"/>
    </location>
</feature>
<feature type="transmembrane region" description="Helical" evidence="1">
    <location>
        <begin position="421"/>
        <end position="441"/>
    </location>
</feature>
<feature type="transmembrane region" description="Helical" evidence="1">
    <location>
        <begin position="451"/>
        <end position="471"/>
    </location>
</feature>
<feature type="transmembrane region" description="Helical" evidence="1">
    <location>
        <begin position="483"/>
        <end position="503"/>
    </location>
</feature>
<feature type="region of interest" description="Disordered" evidence="3">
    <location>
        <begin position="683"/>
        <end position="749"/>
    </location>
</feature>
<feature type="compositionally biased region" description="Polar residues" evidence="3">
    <location>
        <begin position="697"/>
        <end position="718"/>
    </location>
</feature>
<feature type="compositionally biased region" description="Basic residues" evidence="3">
    <location>
        <begin position="728"/>
        <end position="742"/>
    </location>
</feature>
<feature type="glycosylation site" description="N-linked (GlcNAc...) asparagine" evidence="2">
    <location>
        <position position="715"/>
    </location>
</feature>
<organism>
    <name type="scientific">Aspergillus niger (strain ATCC MYA-4892 / CBS 513.88 / FGSC A1513)</name>
    <dbReference type="NCBI Taxonomy" id="425011"/>
    <lineage>
        <taxon>Eukaryota</taxon>
        <taxon>Fungi</taxon>
        <taxon>Dikarya</taxon>
        <taxon>Ascomycota</taxon>
        <taxon>Pezizomycotina</taxon>
        <taxon>Eurotiomycetes</taxon>
        <taxon>Eurotiomycetidae</taxon>
        <taxon>Eurotiales</taxon>
        <taxon>Aspergillaceae</taxon>
        <taxon>Aspergillus</taxon>
        <taxon>Aspergillus subgen. Circumdati</taxon>
    </lineage>
</organism>
<protein>
    <recommendedName>
        <fullName evidence="5">Chitin synthase G</fullName>
        <ecNumber evidence="7">2.4.1.16</ecNumber>
    </recommendedName>
    <alternativeName>
        <fullName evidence="6">Chitin-UDP acetyl-glucosaminyl transferase G</fullName>
    </alternativeName>
    <alternativeName>
        <fullName evidence="5">Class-VI chitin synthase G</fullName>
    </alternativeName>
</protein>
<sequence>MAEELVPEVLVAWPTRDYIRRPITGVFEFSQSSWPFSSRCVGELVGIFLPVMIAILPLPPQITQYFPHQLVSVLQWFAFWAFSALLIIPWLFCVNRFVIHSLGRTKRVKEALDDRTAPKTVIVMPVYKEDPVVLIKAIDSVVNSDYPSYCIHVFLSYDGCNIDEPYLQVINHLGIPISLESYPQSIDVTYQGARITVSRFKHGGKRHCQKQTFRLIDKVYADYLKHHDDLFLLFIDSDCILDKLCLQNFMYDMELKPGSQHNMLAMTGIITSTTERNSLITVLQDMEYIHGQLVERTVESGCGAVTCLPGALTILRFSAFRKMARYYFADKAEQCEDLFDYGKCHLGEDRWLTHLFMIGAIERYQIQMCTSAFCKTEAVQTFCSLLKQRRRWFLGYITNEVCMLTDVRLWKRYPLLCLVRFMQNTIRTTALLFFILAISIITTSSKIKNLPVGFIAVSLGLNYILMVYFGIRLKRFKAWLYPLMFILNPFFNWLYIVYGIFTAGQRTWGGPRADAAKADEHTTPEEAVEKARVQGDELNVQVDTFRTKTEEKGVPIRPSSKVNGRLSFAPQLPDRYYDYQGALGTSLAKYLTPLPDVPRIGLHPHCSSDSVATSDSGGNSISLPQHVETLMSAEERAKLYIGSQAQESTGLLHTQEADGGERGLDVQSNEDLEDNRAYEMHTIESGSGIPSGKAPVLSSSVPQSGMQQSRAVPGNMSQPHEHLPQPKYTKRPSRIPRQKRRYMQPEQMV</sequence>
<proteinExistence type="inferred from homology"/>
<evidence type="ECO:0000255" key="1"/>
<evidence type="ECO:0000255" key="2">
    <source>
        <dbReference type="PROSITE-ProRule" id="PRU00498"/>
    </source>
</evidence>
<evidence type="ECO:0000256" key="3">
    <source>
        <dbReference type="SAM" id="MobiDB-lite"/>
    </source>
</evidence>
<evidence type="ECO:0000269" key="4">
    <source>
    </source>
</evidence>
<evidence type="ECO:0000303" key="5">
    <source>
    </source>
</evidence>
<evidence type="ECO:0000305" key="6"/>
<evidence type="ECO:0000305" key="7">
    <source>
    </source>
</evidence>
<gene>
    <name evidence="5" type="primary">chsG</name>
    <name type="ORF">An08g05290</name>
</gene>
<accession>A2QRA0</accession>
<reference key="1">
    <citation type="journal article" date="2007" name="Nat. Biotechnol.">
        <title>Genome sequencing and analysis of the versatile cell factory Aspergillus niger CBS 513.88.</title>
        <authorList>
            <person name="Pel H.J."/>
            <person name="de Winde J.H."/>
            <person name="Archer D.B."/>
            <person name="Dyer P.S."/>
            <person name="Hofmann G."/>
            <person name="Schaap P.J."/>
            <person name="Turner G."/>
            <person name="de Vries R.P."/>
            <person name="Albang R."/>
            <person name="Albermann K."/>
            <person name="Andersen M.R."/>
            <person name="Bendtsen J.D."/>
            <person name="Benen J.A.E."/>
            <person name="van den Berg M."/>
            <person name="Breestraat S."/>
            <person name="Caddick M.X."/>
            <person name="Contreras R."/>
            <person name="Cornell M."/>
            <person name="Coutinho P.M."/>
            <person name="Danchin E.G.J."/>
            <person name="Debets A.J.M."/>
            <person name="Dekker P."/>
            <person name="van Dijck P.W.M."/>
            <person name="van Dijk A."/>
            <person name="Dijkhuizen L."/>
            <person name="Driessen A.J.M."/>
            <person name="d'Enfert C."/>
            <person name="Geysens S."/>
            <person name="Goosen C."/>
            <person name="Groot G.S.P."/>
            <person name="de Groot P.W.J."/>
            <person name="Guillemette T."/>
            <person name="Henrissat B."/>
            <person name="Herweijer M."/>
            <person name="van den Hombergh J.P.T.W."/>
            <person name="van den Hondel C.A.M.J.J."/>
            <person name="van der Heijden R.T.J.M."/>
            <person name="van der Kaaij R.M."/>
            <person name="Klis F.M."/>
            <person name="Kools H.J."/>
            <person name="Kubicek C.P."/>
            <person name="van Kuyk P.A."/>
            <person name="Lauber J."/>
            <person name="Lu X."/>
            <person name="van der Maarel M.J.E.C."/>
            <person name="Meulenberg R."/>
            <person name="Menke H."/>
            <person name="Mortimer M.A."/>
            <person name="Nielsen J."/>
            <person name="Oliver S.G."/>
            <person name="Olsthoorn M."/>
            <person name="Pal K."/>
            <person name="van Peij N.N.M.E."/>
            <person name="Ram A.F.J."/>
            <person name="Rinas U."/>
            <person name="Roubos J.A."/>
            <person name="Sagt C.M.J."/>
            <person name="Schmoll M."/>
            <person name="Sun J."/>
            <person name="Ussery D."/>
            <person name="Varga J."/>
            <person name="Vervecken W."/>
            <person name="van de Vondervoort P.J.J."/>
            <person name="Wedler H."/>
            <person name="Woesten H.A.B."/>
            <person name="Zeng A.-P."/>
            <person name="van Ooyen A.J.J."/>
            <person name="Visser J."/>
            <person name="Stam H."/>
        </authorList>
    </citation>
    <scope>NUCLEOTIDE SEQUENCE [LARGE SCALE GENOMIC DNA]</scope>
    <source>
        <strain>ATCC MYA-4892 / CBS 513.88 / FGSC A1513</strain>
    </source>
</reference>
<reference key="2">
    <citation type="journal article" date="2024" name="Fungal Biol. Biotechnol.">
        <title>Breaking down barriers: comprehensive functional analysis of the Aspergillus niger chitin synthase repertoire.</title>
        <authorList>
            <person name="Barthel L."/>
            <person name="Cairns T."/>
            <person name="Duda S."/>
            <person name="Mueller H."/>
            <person name="Dobbert B."/>
            <person name="Jung S."/>
            <person name="Briesen H."/>
            <person name="Meyer V."/>
        </authorList>
    </citation>
    <scope>FUNCTION</scope>
    <scope>DISRUPTION PHENOTYPE</scope>
</reference>
<dbReference type="EC" id="2.4.1.16" evidence="7"/>
<dbReference type="EMBL" id="AM270168">
    <property type="protein sequence ID" value="CAK45501.1"/>
    <property type="molecule type" value="Genomic_DNA"/>
</dbReference>
<dbReference type="CAZy" id="GT2">
    <property type="family name" value="Glycosyltransferase Family 2"/>
</dbReference>
<dbReference type="EnsemblFungi" id="CAK45501">
    <property type="protein sequence ID" value="CAK45501"/>
    <property type="gene ID" value="An08g05290"/>
</dbReference>
<dbReference type="VEuPathDB" id="FungiDB:An08g05290"/>
<dbReference type="HOGENOM" id="CLU_012773_0_0_1"/>
<dbReference type="Proteomes" id="UP000006706">
    <property type="component" value="Chromosome 8R"/>
</dbReference>
<dbReference type="GO" id="GO:0030428">
    <property type="term" value="C:cell septum"/>
    <property type="evidence" value="ECO:0007669"/>
    <property type="project" value="TreeGrafter"/>
</dbReference>
<dbReference type="GO" id="GO:0005886">
    <property type="term" value="C:plasma membrane"/>
    <property type="evidence" value="ECO:0007669"/>
    <property type="project" value="UniProtKB-SubCell"/>
</dbReference>
<dbReference type="GO" id="GO:0004100">
    <property type="term" value="F:chitin synthase activity"/>
    <property type="evidence" value="ECO:0007669"/>
    <property type="project" value="UniProtKB-EC"/>
</dbReference>
<dbReference type="GO" id="GO:0006031">
    <property type="term" value="P:chitin biosynthetic process"/>
    <property type="evidence" value="ECO:0007669"/>
    <property type="project" value="TreeGrafter"/>
</dbReference>
<dbReference type="FunFam" id="3.90.550.10:FF:000077">
    <property type="entry name" value="Probable chitin synthase D"/>
    <property type="match status" value="1"/>
</dbReference>
<dbReference type="Gene3D" id="3.90.550.10">
    <property type="entry name" value="Spore Coat Polysaccharide Biosynthesis Protein SpsA, Chain A"/>
    <property type="match status" value="1"/>
</dbReference>
<dbReference type="InterPro" id="IPR004835">
    <property type="entry name" value="Chitin_synth"/>
</dbReference>
<dbReference type="InterPro" id="IPR029044">
    <property type="entry name" value="Nucleotide-diphossugar_trans"/>
</dbReference>
<dbReference type="PANTHER" id="PTHR22914">
    <property type="entry name" value="CHITIN SYNTHASE"/>
    <property type="match status" value="1"/>
</dbReference>
<dbReference type="PANTHER" id="PTHR22914:SF46">
    <property type="entry name" value="CHITIN SYNTHASE"/>
    <property type="match status" value="1"/>
</dbReference>
<dbReference type="Pfam" id="PF03142">
    <property type="entry name" value="Chitin_synth_2"/>
    <property type="match status" value="1"/>
</dbReference>
<dbReference type="SUPFAM" id="SSF53448">
    <property type="entry name" value="Nucleotide-diphospho-sugar transferases"/>
    <property type="match status" value="1"/>
</dbReference>